<feature type="chain" id="PRO_1000081532" description="UPF0181 protein YoaH">
    <location>
        <begin position="1"/>
        <end position="59"/>
    </location>
</feature>
<name>YOAH_ECOLC</name>
<dbReference type="EMBL" id="CP000946">
    <property type="protein sequence ID" value="ACA77471.1"/>
    <property type="molecule type" value="Genomic_DNA"/>
</dbReference>
<dbReference type="RefSeq" id="WP_000457334.1">
    <property type="nucleotide sequence ID" value="NZ_MTFT01000006.1"/>
</dbReference>
<dbReference type="SMR" id="B1IPC1"/>
<dbReference type="KEGG" id="ecl:EcolC_1822"/>
<dbReference type="HOGENOM" id="CLU_185263_0_0_6"/>
<dbReference type="HAMAP" id="MF_00507">
    <property type="entry name" value="UPF0181"/>
    <property type="match status" value="1"/>
</dbReference>
<dbReference type="InterPro" id="IPR005371">
    <property type="entry name" value="UPF0181"/>
</dbReference>
<dbReference type="NCBIfam" id="NF003476">
    <property type="entry name" value="PRK05114.1"/>
    <property type="match status" value="1"/>
</dbReference>
<dbReference type="Pfam" id="PF03701">
    <property type="entry name" value="UPF0181"/>
    <property type="match status" value="1"/>
</dbReference>
<reference key="1">
    <citation type="submission" date="2008-02" db="EMBL/GenBank/DDBJ databases">
        <title>Complete sequence of Escherichia coli C str. ATCC 8739.</title>
        <authorList>
            <person name="Copeland A."/>
            <person name="Lucas S."/>
            <person name="Lapidus A."/>
            <person name="Glavina del Rio T."/>
            <person name="Dalin E."/>
            <person name="Tice H."/>
            <person name="Bruce D."/>
            <person name="Goodwin L."/>
            <person name="Pitluck S."/>
            <person name="Kiss H."/>
            <person name="Brettin T."/>
            <person name="Detter J.C."/>
            <person name="Han C."/>
            <person name="Kuske C.R."/>
            <person name="Schmutz J."/>
            <person name="Larimer F."/>
            <person name="Land M."/>
            <person name="Hauser L."/>
            <person name="Kyrpides N."/>
            <person name="Mikhailova N."/>
            <person name="Ingram L."/>
            <person name="Richardson P."/>
        </authorList>
    </citation>
    <scope>NUCLEOTIDE SEQUENCE [LARGE SCALE GENOMIC DNA]</scope>
    <source>
        <strain>ATCC 8739 / DSM 1576 / NBRC 3972 / NCIMB 8545 / WDCM 00012 / Crooks</strain>
    </source>
</reference>
<gene>
    <name evidence="1" type="primary">yoaH</name>
    <name type="ordered locus">EcolC_1822</name>
</gene>
<organism>
    <name type="scientific">Escherichia coli (strain ATCC 8739 / DSM 1576 / NBRC 3972 / NCIMB 8545 / WDCM 00012 / Crooks)</name>
    <dbReference type="NCBI Taxonomy" id="481805"/>
    <lineage>
        <taxon>Bacteria</taxon>
        <taxon>Pseudomonadati</taxon>
        <taxon>Pseudomonadota</taxon>
        <taxon>Gammaproteobacteria</taxon>
        <taxon>Enterobacterales</taxon>
        <taxon>Enterobacteriaceae</taxon>
        <taxon>Escherichia</taxon>
    </lineage>
</organism>
<protein>
    <recommendedName>
        <fullName evidence="1">UPF0181 protein YoaH</fullName>
    </recommendedName>
</protein>
<accession>B1IPC1</accession>
<sequence>MFAGLPSLTHEQQQKAVERIQELMAQGMSSGQAIALVAEELRANHSGERIVARFEDEDE</sequence>
<proteinExistence type="inferred from homology"/>
<comment type="similarity">
    <text evidence="1">Belongs to the UPF0181 family.</text>
</comment>
<evidence type="ECO:0000255" key="1">
    <source>
        <dbReference type="HAMAP-Rule" id="MF_00507"/>
    </source>
</evidence>